<keyword id="KW-0238">DNA-binding</keyword>
<keyword id="KW-0539">Nucleus</keyword>
<keyword id="KW-1185">Reference proteome</keyword>
<keyword id="KW-0804">Transcription</keyword>
<keyword id="KW-0805">Transcription regulation</keyword>
<dbReference type="EMBL" id="AF228664">
    <property type="protein sequence ID" value="AAF73917.1"/>
    <property type="molecule type" value="mRNA"/>
</dbReference>
<dbReference type="RefSeq" id="NP_990062.1">
    <property type="nucleotide sequence ID" value="NM_204731.1"/>
</dbReference>
<dbReference type="SMR" id="P57074"/>
<dbReference type="FunCoup" id="P57074">
    <property type="interactions" value="5"/>
</dbReference>
<dbReference type="STRING" id="9031.ENSGALP00000008435"/>
<dbReference type="PaxDb" id="9031-ENSGALP00000008435"/>
<dbReference type="GeneID" id="395483"/>
<dbReference type="KEGG" id="gga:395483"/>
<dbReference type="CTD" id="30812"/>
<dbReference type="VEuPathDB" id="HostDB:geneid_395483"/>
<dbReference type="eggNOG" id="KOG0527">
    <property type="taxonomic scope" value="Eukaryota"/>
</dbReference>
<dbReference type="InParanoid" id="P57074"/>
<dbReference type="OrthoDB" id="6247875at2759"/>
<dbReference type="PhylomeDB" id="P57074"/>
<dbReference type="PRO" id="PR:P57074"/>
<dbReference type="Proteomes" id="UP000000539">
    <property type="component" value="Unassembled WGS sequence"/>
</dbReference>
<dbReference type="GO" id="GO:0005634">
    <property type="term" value="C:nucleus"/>
    <property type="evidence" value="ECO:0000318"/>
    <property type="project" value="GO_Central"/>
</dbReference>
<dbReference type="GO" id="GO:0000981">
    <property type="term" value="F:DNA-binding transcription factor activity, RNA polymerase II-specific"/>
    <property type="evidence" value="ECO:0000318"/>
    <property type="project" value="GO_Central"/>
</dbReference>
<dbReference type="GO" id="GO:0000978">
    <property type="term" value="F:RNA polymerase II cis-regulatory region sequence-specific DNA binding"/>
    <property type="evidence" value="ECO:0000318"/>
    <property type="project" value="GO_Central"/>
</dbReference>
<dbReference type="GO" id="GO:0048484">
    <property type="term" value="P:enteric nervous system development"/>
    <property type="evidence" value="ECO:0000318"/>
    <property type="project" value="GO_Central"/>
</dbReference>
<dbReference type="GO" id="GO:0003170">
    <property type="term" value="P:heart valve development"/>
    <property type="evidence" value="ECO:0000270"/>
    <property type="project" value="UniProtKB"/>
</dbReference>
<dbReference type="GO" id="GO:0002009">
    <property type="term" value="P:morphogenesis of an epithelium"/>
    <property type="evidence" value="ECO:0000318"/>
    <property type="project" value="GO_Central"/>
</dbReference>
<dbReference type="GO" id="GO:0000122">
    <property type="term" value="P:negative regulation of transcription by RNA polymerase II"/>
    <property type="evidence" value="ECO:0000318"/>
    <property type="project" value="GO_Central"/>
</dbReference>
<dbReference type="GO" id="GO:0014032">
    <property type="term" value="P:neural crest cell development"/>
    <property type="evidence" value="ECO:0000318"/>
    <property type="project" value="GO_Central"/>
</dbReference>
<dbReference type="GO" id="GO:0048709">
    <property type="term" value="P:oligodendrocyte differentiation"/>
    <property type="evidence" value="ECO:0000270"/>
    <property type="project" value="UniProtKB"/>
</dbReference>
<dbReference type="GO" id="GO:0007422">
    <property type="term" value="P:peripheral nervous system development"/>
    <property type="evidence" value="ECO:0000318"/>
    <property type="project" value="GO_Central"/>
</dbReference>
<dbReference type="CDD" id="cd22031">
    <property type="entry name" value="HMG-box_SoxE"/>
    <property type="match status" value="1"/>
</dbReference>
<dbReference type="FunFam" id="1.10.30.10:FF:000004">
    <property type="entry name" value="Transcription factor SOX-10"/>
    <property type="match status" value="1"/>
</dbReference>
<dbReference type="Gene3D" id="1.10.30.10">
    <property type="entry name" value="High mobility group box domain"/>
    <property type="match status" value="1"/>
</dbReference>
<dbReference type="InterPro" id="IPR009071">
    <property type="entry name" value="HMG_box_dom"/>
</dbReference>
<dbReference type="InterPro" id="IPR036910">
    <property type="entry name" value="HMG_box_dom_sf"/>
</dbReference>
<dbReference type="InterPro" id="IPR022151">
    <property type="entry name" value="Sox_N"/>
</dbReference>
<dbReference type="InterPro" id="IPR050917">
    <property type="entry name" value="SOX_TF"/>
</dbReference>
<dbReference type="PANTHER" id="PTHR45803">
    <property type="entry name" value="SOX100B"/>
    <property type="match status" value="1"/>
</dbReference>
<dbReference type="PANTHER" id="PTHR45803:SF2">
    <property type="entry name" value="TRANSCRIPTION FACTOR SOX-8"/>
    <property type="match status" value="1"/>
</dbReference>
<dbReference type="Pfam" id="PF00505">
    <property type="entry name" value="HMG_box"/>
    <property type="match status" value="1"/>
</dbReference>
<dbReference type="Pfam" id="PF12444">
    <property type="entry name" value="Sox_N"/>
    <property type="match status" value="1"/>
</dbReference>
<dbReference type="SMART" id="SM00398">
    <property type="entry name" value="HMG"/>
    <property type="match status" value="1"/>
</dbReference>
<dbReference type="SUPFAM" id="SSF47095">
    <property type="entry name" value="HMG-box"/>
    <property type="match status" value="1"/>
</dbReference>
<dbReference type="PROSITE" id="PS50118">
    <property type="entry name" value="HMG_BOX_2"/>
    <property type="match status" value="1"/>
</dbReference>
<protein>
    <recommendedName>
        <fullName>Transcription factor SOX-8</fullName>
    </recommendedName>
</protein>
<gene>
    <name type="primary">SOX8</name>
</gene>
<accession>P57074</accession>
<name>SOX8_CHICK</name>
<organism>
    <name type="scientific">Gallus gallus</name>
    <name type="common">Chicken</name>
    <dbReference type="NCBI Taxonomy" id="9031"/>
    <lineage>
        <taxon>Eukaryota</taxon>
        <taxon>Metazoa</taxon>
        <taxon>Chordata</taxon>
        <taxon>Craniata</taxon>
        <taxon>Vertebrata</taxon>
        <taxon>Euteleostomi</taxon>
        <taxon>Archelosauria</taxon>
        <taxon>Archosauria</taxon>
        <taxon>Dinosauria</taxon>
        <taxon>Saurischia</taxon>
        <taxon>Theropoda</taxon>
        <taxon>Coelurosauria</taxon>
        <taxon>Aves</taxon>
        <taxon>Neognathae</taxon>
        <taxon>Galloanserae</taxon>
        <taxon>Galliformes</taxon>
        <taxon>Phasianidae</taxon>
        <taxon>Phasianinae</taxon>
        <taxon>Gallus</taxon>
    </lineage>
</organism>
<comment type="function">
    <text evidence="3">Transcription factor that may play a role in central nervous system, limb and facial development. May be involved in male sex determination. Binds the consensus motif 5'-[AT][AT]CAA[AT]G-3'.</text>
</comment>
<comment type="subcellular location">
    <subcellularLocation>
        <location evidence="4">Nucleus</location>
    </subcellularLocation>
</comment>
<comment type="tissue specificity">
    <text evidence="6">Widely expressed in the embryo.</text>
</comment>
<comment type="domain">
    <text evidence="1">The transactivation domains TAM and TAC (for transactivation domain in the middle and at the C-terminus, respectively) are required to contact transcriptional coactivators and basal transcriptional machinery components and thereby induce gene transactivation.</text>
</comment>
<comment type="domain">
    <text evidence="2">The 9aaTAD motif is a transactivation domain present in a large number of yeast and animal transcription factors.</text>
</comment>
<evidence type="ECO:0000250" key="1">
    <source>
        <dbReference type="UniProtKB" id="P48436"/>
    </source>
</evidence>
<evidence type="ECO:0000250" key="2">
    <source>
        <dbReference type="UniProtKB" id="P57073"/>
    </source>
</evidence>
<evidence type="ECO:0000250" key="3">
    <source>
        <dbReference type="UniProtKB" id="Q04886"/>
    </source>
</evidence>
<evidence type="ECO:0000255" key="4">
    <source>
        <dbReference type="PROSITE-ProRule" id="PRU00267"/>
    </source>
</evidence>
<evidence type="ECO:0000256" key="5">
    <source>
        <dbReference type="SAM" id="MobiDB-lite"/>
    </source>
</evidence>
<evidence type="ECO:0000269" key="6">
    <source>
    </source>
</evidence>
<feature type="chain" id="PRO_0000048735" description="Transcription factor SOX-8">
    <location>
        <begin position="1"/>
        <end position="470"/>
    </location>
</feature>
<feature type="DNA-binding region" description="HMG box" evidence="4">
    <location>
        <begin position="109"/>
        <end position="177"/>
    </location>
</feature>
<feature type="region of interest" description="Disordered" evidence="5">
    <location>
        <begin position="1"/>
        <end position="60"/>
    </location>
</feature>
<feature type="region of interest" description="Dimerization (DIM)" evidence="2">
    <location>
        <begin position="67"/>
        <end position="107"/>
    </location>
</feature>
<feature type="region of interest" description="Disordered" evidence="5">
    <location>
        <begin position="163"/>
        <end position="257"/>
    </location>
</feature>
<feature type="region of interest" description="Transactivation domain (TAM)" evidence="2">
    <location>
        <begin position="233"/>
        <end position="308"/>
    </location>
</feature>
<feature type="region of interest" description="Disordered" evidence="5">
    <location>
        <begin position="327"/>
        <end position="381"/>
    </location>
</feature>
<feature type="region of interest" description="Transactivation domain (TAC)" evidence="2">
    <location>
        <begin position="353"/>
        <end position="470"/>
    </location>
</feature>
<feature type="short sequence motif" description="9aaTAD" evidence="2">
    <location>
        <begin position="424"/>
        <end position="432"/>
    </location>
</feature>
<feature type="compositionally biased region" description="Basic and acidic residues" evidence="5">
    <location>
        <begin position="1"/>
        <end position="12"/>
    </location>
</feature>
<feature type="compositionally biased region" description="Basic and acidic residues" evidence="5">
    <location>
        <begin position="163"/>
        <end position="178"/>
    </location>
</feature>
<feature type="compositionally biased region" description="Basic and acidic residues" evidence="5">
    <location>
        <begin position="219"/>
        <end position="228"/>
    </location>
</feature>
<feature type="compositionally biased region" description="Basic and acidic residues" evidence="5">
    <location>
        <begin position="242"/>
        <end position="257"/>
    </location>
</feature>
<feature type="compositionally biased region" description="Low complexity" evidence="5">
    <location>
        <begin position="338"/>
        <end position="349"/>
    </location>
</feature>
<feature type="compositionally biased region" description="Polar residues" evidence="5">
    <location>
        <begin position="359"/>
        <end position="372"/>
    </location>
</feature>
<sequence length="470" mass="50830">MLNMTEEHDKALEAPCSPAGTTSSMSHVDSDSDSPLSPAGSEGLGCAPAPAPRPPGAAPLGAKVDAAEVDERFPACIRDAVSQVLKGYDWSLVPMPVRGNGSLKAKPHVKRPMNAFMVWAQAARRKLADQYPHLHNAELSKTLGKLWRLLSENEKRPFVEEAERLRVQHKKDHPDYKYQPRRRKSVKAGQSDSDSGAELSHHAGTQIYKADSGLGGMADGHHHGEHAGQPHGPPTPPTTPKTDLHHGSKQELKHEGRRLVESGRQNIDFSNVDISELSSEVINNMETFDVHEFDQYLPLNGHTAMPADHGPGAGFYSTSYSHSAAGAGGAGQVWTHKSPASASPSSADSGQQRPHIKTEQLSPSHYSDQSHGSPAHSDYGSYSTQACATTASTATAAASFSSSQCDYTDLQSSNYYNPYPGYPSSIYQYPYFHSSRRPYATPILNGLSIPPAHSPTANWDQPVYTTLTRP</sequence>
<reference key="1">
    <citation type="journal article" date="2000" name="Mech. Dev.">
        <title>SOX8 expression during chick embryogenesis.</title>
        <authorList>
            <person name="Bell K.M."/>
            <person name="Western P.S."/>
            <person name="Sinclair A.H."/>
        </authorList>
    </citation>
    <scope>NUCLEOTIDE SEQUENCE [MRNA]</scope>
    <scope>TISSUE SPECIFICITY</scope>
</reference>
<proteinExistence type="evidence at transcript level"/>